<accession>Q67RG2</accession>
<proteinExistence type="inferred from homology"/>
<dbReference type="EC" id="7.3.2.1" evidence="1"/>
<dbReference type="EMBL" id="AP006840">
    <property type="protein sequence ID" value="BAD39731.1"/>
    <property type="molecule type" value="Genomic_DNA"/>
</dbReference>
<dbReference type="SMR" id="Q67RG2"/>
<dbReference type="STRING" id="292459.STH746"/>
<dbReference type="KEGG" id="sth:STH746"/>
<dbReference type="eggNOG" id="COG1117">
    <property type="taxonomic scope" value="Bacteria"/>
</dbReference>
<dbReference type="HOGENOM" id="CLU_000604_1_22_9"/>
<dbReference type="Proteomes" id="UP000000417">
    <property type="component" value="Chromosome"/>
</dbReference>
<dbReference type="GO" id="GO:0005886">
    <property type="term" value="C:plasma membrane"/>
    <property type="evidence" value="ECO:0007669"/>
    <property type="project" value="UniProtKB-SubCell"/>
</dbReference>
<dbReference type="GO" id="GO:0005524">
    <property type="term" value="F:ATP binding"/>
    <property type="evidence" value="ECO:0007669"/>
    <property type="project" value="UniProtKB-KW"/>
</dbReference>
<dbReference type="GO" id="GO:0016887">
    <property type="term" value="F:ATP hydrolysis activity"/>
    <property type="evidence" value="ECO:0007669"/>
    <property type="project" value="InterPro"/>
</dbReference>
<dbReference type="GO" id="GO:0015415">
    <property type="term" value="F:ATPase-coupled phosphate ion transmembrane transporter activity"/>
    <property type="evidence" value="ECO:0007669"/>
    <property type="project" value="UniProtKB-EC"/>
</dbReference>
<dbReference type="GO" id="GO:0035435">
    <property type="term" value="P:phosphate ion transmembrane transport"/>
    <property type="evidence" value="ECO:0007669"/>
    <property type="project" value="InterPro"/>
</dbReference>
<dbReference type="CDD" id="cd03260">
    <property type="entry name" value="ABC_PstB_phosphate_transporter"/>
    <property type="match status" value="1"/>
</dbReference>
<dbReference type="FunFam" id="3.40.50.300:FF:000132">
    <property type="entry name" value="Phosphate import ATP-binding protein PstB"/>
    <property type="match status" value="1"/>
</dbReference>
<dbReference type="Gene3D" id="3.40.50.300">
    <property type="entry name" value="P-loop containing nucleotide triphosphate hydrolases"/>
    <property type="match status" value="1"/>
</dbReference>
<dbReference type="InterPro" id="IPR003593">
    <property type="entry name" value="AAA+_ATPase"/>
</dbReference>
<dbReference type="InterPro" id="IPR003439">
    <property type="entry name" value="ABC_transporter-like_ATP-bd"/>
</dbReference>
<dbReference type="InterPro" id="IPR017871">
    <property type="entry name" value="ABC_transporter-like_CS"/>
</dbReference>
<dbReference type="InterPro" id="IPR027417">
    <property type="entry name" value="P-loop_NTPase"/>
</dbReference>
<dbReference type="InterPro" id="IPR005670">
    <property type="entry name" value="PstB-like"/>
</dbReference>
<dbReference type="NCBIfam" id="TIGR00972">
    <property type="entry name" value="3a0107s01c2"/>
    <property type="match status" value="1"/>
</dbReference>
<dbReference type="PANTHER" id="PTHR43423">
    <property type="entry name" value="ABC TRANSPORTER I FAMILY MEMBER 17"/>
    <property type="match status" value="1"/>
</dbReference>
<dbReference type="PANTHER" id="PTHR43423:SF1">
    <property type="entry name" value="ABC TRANSPORTER I FAMILY MEMBER 17"/>
    <property type="match status" value="1"/>
</dbReference>
<dbReference type="Pfam" id="PF00005">
    <property type="entry name" value="ABC_tran"/>
    <property type="match status" value="1"/>
</dbReference>
<dbReference type="SMART" id="SM00382">
    <property type="entry name" value="AAA"/>
    <property type="match status" value="1"/>
</dbReference>
<dbReference type="SUPFAM" id="SSF52540">
    <property type="entry name" value="P-loop containing nucleoside triphosphate hydrolases"/>
    <property type="match status" value="1"/>
</dbReference>
<dbReference type="PROSITE" id="PS00211">
    <property type="entry name" value="ABC_TRANSPORTER_1"/>
    <property type="match status" value="1"/>
</dbReference>
<dbReference type="PROSITE" id="PS50893">
    <property type="entry name" value="ABC_TRANSPORTER_2"/>
    <property type="match status" value="1"/>
</dbReference>
<dbReference type="PROSITE" id="PS51238">
    <property type="entry name" value="PSTB"/>
    <property type="match status" value="1"/>
</dbReference>
<feature type="chain" id="PRO_0000092911" description="Phosphate import ATP-binding protein PstB 1">
    <location>
        <begin position="1"/>
        <end position="242"/>
    </location>
</feature>
<feature type="domain" description="ABC transporter" evidence="1">
    <location>
        <begin position="1"/>
        <end position="237"/>
    </location>
</feature>
<feature type="binding site" evidence="1">
    <location>
        <begin position="28"/>
        <end position="35"/>
    </location>
    <ligand>
        <name>ATP</name>
        <dbReference type="ChEBI" id="CHEBI:30616"/>
    </ligand>
</feature>
<protein>
    <recommendedName>
        <fullName evidence="1">Phosphate import ATP-binding protein PstB 1</fullName>
        <ecNumber evidence="1">7.3.2.1</ecNumber>
    </recommendedName>
    <alternativeName>
        <fullName evidence="1">ABC phosphate transporter 1</fullName>
    </alternativeName>
    <alternativeName>
        <fullName evidence="1">Phosphate-transporting ATPase 1</fullName>
    </alternativeName>
</protein>
<evidence type="ECO:0000255" key="1">
    <source>
        <dbReference type="HAMAP-Rule" id="MF_01702"/>
    </source>
</evidence>
<gene>
    <name evidence="1" type="primary">pstB1</name>
    <name type="ordered locus">STH746</name>
</gene>
<reference key="1">
    <citation type="journal article" date="2004" name="Nucleic Acids Res.">
        <title>Genome sequence of Symbiobacterium thermophilum, an uncultivable bacterium that depends on microbial commensalism.</title>
        <authorList>
            <person name="Ueda K."/>
            <person name="Yamashita A."/>
            <person name="Ishikawa J."/>
            <person name="Shimada M."/>
            <person name="Watsuji T."/>
            <person name="Morimura K."/>
            <person name="Ikeda H."/>
            <person name="Hattori M."/>
            <person name="Beppu T."/>
        </authorList>
    </citation>
    <scope>NUCLEOTIDE SEQUENCE [LARGE SCALE GENOMIC DNA]</scope>
    <source>
        <strain>DSM 24528 / JCM 14929 / IAM 14863 / T</strain>
    </source>
</reference>
<name>PSTB1_SYMTH</name>
<organism>
    <name type="scientific">Symbiobacterium thermophilum (strain DSM 24528 / JCM 14929 / IAM 14863 / T)</name>
    <dbReference type="NCBI Taxonomy" id="292459"/>
    <lineage>
        <taxon>Bacteria</taxon>
        <taxon>Bacillati</taxon>
        <taxon>Bacillota</taxon>
        <taxon>Clostridia</taxon>
        <taxon>Eubacteriales</taxon>
        <taxon>Symbiobacteriaceae</taxon>
        <taxon>Symbiobacterium</taxon>
    </lineage>
</organism>
<comment type="function">
    <text evidence="1">Part of the ABC transporter complex PstSACB involved in phosphate import. Responsible for energy coupling to the transport system.</text>
</comment>
<comment type="catalytic activity">
    <reaction evidence="1">
        <text>phosphate(out) + ATP + H2O = ADP + 2 phosphate(in) + H(+)</text>
        <dbReference type="Rhea" id="RHEA:24440"/>
        <dbReference type="ChEBI" id="CHEBI:15377"/>
        <dbReference type="ChEBI" id="CHEBI:15378"/>
        <dbReference type="ChEBI" id="CHEBI:30616"/>
        <dbReference type="ChEBI" id="CHEBI:43474"/>
        <dbReference type="ChEBI" id="CHEBI:456216"/>
        <dbReference type="EC" id="7.3.2.1"/>
    </reaction>
</comment>
<comment type="subunit">
    <text evidence="1">The complex is composed of two ATP-binding proteins (PstB), two transmembrane proteins (PstC and PstA) and a solute-binding protein (PstS).</text>
</comment>
<comment type="subcellular location">
    <subcellularLocation>
        <location evidence="1">Cell membrane</location>
        <topology evidence="1">Peripheral membrane protein</topology>
    </subcellularLocation>
</comment>
<comment type="similarity">
    <text evidence="1">Belongs to the ABC transporter superfamily. Phosphate importer (TC 3.A.1.7) family.</text>
</comment>
<keyword id="KW-0067">ATP-binding</keyword>
<keyword id="KW-1003">Cell membrane</keyword>
<keyword id="KW-0472">Membrane</keyword>
<keyword id="KW-0547">Nucleotide-binding</keyword>
<keyword id="KW-0592">Phosphate transport</keyword>
<keyword id="KW-1185">Reference proteome</keyword>
<keyword id="KW-1278">Translocase</keyword>
<keyword id="KW-0813">Transport</keyword>
<sequence length="242" mass="26835">MDLYYGSYRALRSISLEIPANRVTALIGPSGCGKSSFLRCLNRMNDLIPGARVEGTITLDGADIYAPGVDVVALRRRVGMVFQRPNPFPMSIYDNVAYGPRIHGERRKAVLDEIVEQSLRGAALWDEVKDRLHRSALGLSGGQQQRLCIARSLAVKPEVLLMDEPASALDPISTAKIEELIRELRAQYSIVIVTHNMQQAARISDYTAFFLSGELIEHGPTGTIFTNPKDQRTEDYITGRFG</sequence>